<dbReference type="EMBL" id="AE005174">
    <property type="protein sequence ID" value="AAG58923.1"/>
    <property type="molecule type" value="Genomic_DNA"/>
</dbReference>
<dbReference type="EMBL" id="BA000007">
    <property type="protein sequence ID" value="BAB38086.1"/>
    <property type="molecule type" value="Genomic_DNA"/>
</dbReference>
<dbReference type="PIR" id="G86057">
    <property type="entry name" value="G86057"/>
</dbReference>
<dbReference type="PIR" id="G91211">
    <property type="entry name" value="G91211"/>
</dbReference>
<dbReference type="RefSeq" id="NP_312690.1">
    <property type="nucleotide sequence ID" value="NC_002695.1"/>
</dbReference>
<dbReference type="RefSeq" id="WP_000741620.1">
    <property type="nucleotide sequence ID" value="NZ_VOAI01000011.1"/>
</dbReference>
<dbReference type="STRING" id="155864.Z5218"/>
<dbReference type="GeneID" id="915372"/>
<dbReference type="GeneID" id="93778214"/>
<dbReference type="KEGG" id="ece:Z5218"/>
<dbReference type="KEGG" id="ecs:ECs_4663"/>
<dbReference type="PATRIC" id="fig|386585.9.peg.4868"/>
<dbReference type="eggNOG" id="COG0573">
    <property type="taxonomic scope" value="Bacteria"/>
</dbReference>
<dbReference type="HOGENOM" id="CLU_033621_1_3_6"/>
<dbReference type="OMA" id="GNIAIEM"/>
<dbReference type="Proteomes" id="UP000000558">
    <property type="component" value="Chromosome"/>
</dbReference>
<dbReference type="Proteomes" id="UP000002519">
    <property type="component" value="Chromosome"/>
</dbReference>
<dbReference type="GO" id="GO:0005886">
    <property type="term" value="C:plasma membrane"/>
    <property type="evidence" value="ECO:0007669"/>
    <property type="project" value="UniProtKB-SubCell"/>
</dbReference>
<dbReference type="GO" id="GO:0005315">
    <property type="term" value="F:phosphate transmembrane transporter activity"/>
    <property type="evidence" value="ECO:0007669"/>
    <property type="project" value="InterPro"/>
</dbReference>
<dbReference type="GO" id="GO:0006817">
    <property type="term" value="P:phosphate ion transport"/>
    <property type="evidence" value="ECO:0007669"/>
    <property type="project" value="UniProtKB-KW"/>
</dbReference>
<dbReference type="CDD" id="cd06261">
    <property type="entry name" value="TM_PBP2"/>
    <property type="match status" value="1"/>
</dbReference>
<dbReference type="Gene3D" id="1.10.3720.10">
    <property type="entry name" value="MetI-like"/>
    <property type="match status" value="1"/>
</dbReference>
<dbReference type="InterPro" id="IPR000515">
    <property type="entry name" value="MetI-like"/>
</dbReference>
<dbReference type="InterPro" id="IPR035906">
    <property type="entry name" value="MetI-like_sf"/>
</dbReference>
<dbReference type="InterPro" id="IPR011864">
    <property type="entry name" value="Phosphate_PstC"/>
</dbReference>
<dbReference type="InterPro" id="IPR051124">
    <property type="entry name" value="Phosphate_Transport_Permease"/>
</dbReference>
<dbReference type="NCBIfam" id="TIGR02138">
    <property type="entry name" value="phosphate_pstC"/>
    <property type="match status" value="1"/>
</dbReference>
<dbReference type="NCBIfam" id="NF008435">
    <property type="entry name" value="PRK11275.1"/>
    <property type="match status" value="1"/>
</dbReference>
<dbReference type="PANTHER" id="PTHR30425">
    <property type="entry name" value="PHOSPHATE TRANSPORT SYSTEM PERMEASE PROTEIN PST"/>
    <property type="match status" value="1"/>
</dbReference>
<dbReference type="PANTHER" id="PTHR30425:SF1">
    <property type="entry name" value="PHOSPHATE TRANSPORT SYSTEM PERMEASE PROTEIN PSTC"/>
    <property type="match status" value="1"/>
</dbReference>
<dbReference type="Pfam" id="PF00528">
    <property type="entry name" value="BPD_transp_1"/>
    <property type="match status" value="1"/>
</dbReference>
<dbReference type="SUPFAM" id="SSF161098">
    <property type="entry name" value="MetI-like"/>
    <property type="match status" value="1"/>
</dbReference>
<dbReference type="PROSITE" id="PS50928">
    <property type="entry name" value="ABC_TM1"/>
    <property type="match status" value="1"/>
</dbReference>
<protein>
    <recommendedName>
        <fullName>Phosphate transport system permease protein PstC</fullName>
    </recommendedName>
</protein>
<sequence>MAATKPAFNPPGKKGDIIFSVLVKLAALIVLLMLGGIIVSLIISSWPSIQKFGLAFLWTKEWDAPNDIYGALVPIYGTLVTSFIALLIAVPVSFGIALFLTELAPGWLKRPLGIAIELLAAIPSIVYGMWGLFIFAPLFAVYFQEPVGNIMSNIPIVGALFSGPAFGIGILAAGVILAIMIIPYIAAVMRDVFEQTPVMMKESAYGIGCTTWEVIWRIVLPFTKNGVIGGIMLGLGRALGETMAVTFIIGNTYQLDSASLYMPGNSITSALANEFAEAESGLHVAALMELGLILFVITFIVLAASKFMIMRLAKNEGAR</sequence>
<proteinExistence type="inferred from homology"/>
<accession>P0AGH9</accession>
<accession>P07653</accession>
<comment type="function">
    <text evidence="1">Part of the binding-protein-dependent transport system for phosphate; probably responsible for the translocation of the substrate across the membrane.</text>
</comment>
<comment type="subcellular location">
    <subcellularLocation>
        <location evidence="1">Cell inner membrane</location>
        <topology evidence="3">Multi-pass membrane protein</topology>
    </subcellularLocation>
</comment>
<comment type="similarity">
    <text evidence="4">Belongs to the binding-protein-dependent transport system permease family. CysTW subfamily.</text>
</comment>
<organism>
    <name type="scientific">Escherichia coli O157:H7</name>
    <dbReference type="NCBI Taxonomy" id="83334"/>
    <lineage>
        <taxon>Bacteria</taxon>
        <taxon>Pseudomonadati</taxon>
        <taxon>Pseudomonadota</taxon>
        <taxon>Gammaproteobacteria</taxon>
        <taxon>Enterobacterales</taxon>
        <taxon>Enterobacteriaceae</taxon>
        <taxon>Escherichia</taxon>
    </lineage>
</organism>
<reference key="1">
    <citation type="journal article" date="2001" name="Nature">
        <title>Genome sequence of enterohaemorrhagic Escherichia coli O157:H7.</title>
        <authorList>
            <person name="Perna N.T."/>
            <person name="Plunkett G. III"/>
            <person name="Burland V."/>
            <person name="Mau B."/>
            <person name="Glasner J.D."/>
            <person name="Rose D.J."/>
            <person name="Mayhew G.F."/>
            <person name="Evans P.S."/>
            <person name="Gregor J."/>
            <person name="Kirkpatrick H.A."/>
            <person name="Posfai G."/>
            <person name="Hackett J."/>
            <person name="Klink S."/>
            <person name="Boutin A."/>
            <person name="Shao Y."/>
            <person name="Miller L."/>
            <person name="Grotbeck E.J."/>
            <person name="Davis N.W."/>
            <person name="Lim A."/>
            <person name="Dimalanta E.T."/>
            <person name="Potamousis K."/>
            <person name="Apodaca J."/>
            <person name="Anantharaman T.S."/>
            <person name="Lin J."/>
            <person name="Yen G."/>
            <person name="Schwartz D.C."/>
            <person name="Welch R.A."/>
            <person name="Blattner F.R."/>
        </authorList>
    </citation>
    <scope>NUCLEOTIDE SEQUENCE [LARGE SCALE GENOMIC DNA]</scope>
    <source>
        <strain>O157:H7 / EDL933 / ATCC 700927 / EHEC</strain>
    </source>
</reference>
<reference key="2">
    <citation type="journal article" date="2001" name="DNA Res.">
        <title>Complete genome sequence of enterohemorrhagic Escherichia coli O157:H7 and genomic comparison with a laboratory strain K-12.</title>
        <authorList>
            <person name="Hayashi T."/>
            <person name="Makino K."/>
            <person name="Ohnishi M."/>
            <person name="Kurokawa K."/>
            <person name="Ishii K."/>
            <person name="Yokoyama K."/>
            <person name="Han C.-G."/>
            <person name="Ohtsubo E."/>
            <person name="Nakayama K."/>
            <person name="Murata T."/>
            <person name="Tanaka M."/>
            <person name="Tobe T."/>
            <person name="Iida T."/>
            <person name="Takami H."/>
            <person name="Honda T."/>
            <person name="Sasakawa C."/>
            <person name="Ogasawara N."/>
            <person name="Yasunaga T."/>
            <person name="Kuhara S."/>
            <person name="Shiba T."/>
            <person name="Hattori M."/>
            <person name="Shinagawa H."/>
        </authorList>
    </citation>
    <scope>NUCLEOTIDE SEQUENCE [LARGE SCALE GENOMIC DNA]</scope>
    <source>
        <strain>O157:H7 / Sakai / RIMD 0509952 / EHEC</strain>
    </source>
</reference>
<feature type="chain" id="PRO_0000060208" description="Phosphate transport system permease protein PstC">
    <location>
        <begin position="1"/>
        <end position="319"/>
    </location>
</feature>
<feature type="topological domain" description="Cytoplasmic" evidence="2">
    <location>
        <begin position="1"/>
        <end position="24"/>
    </location>
</feature>
<feature type="transmembrane region" description="Helical" evidence="3">
    <location>
        <begin position="25"/>
        <end position="44"/>
    </location>
</feature>
<feature type="topological domain" description="Periplasmic" evidence="2">
    <location>
        <begin position="45"/>
        <end position="74"/>
    </location>
</feature>
<feature type="transmembrane region" description="Helical" evidence="3">
    <location>
        <begin position="75"/>
        <end position="94"/>
    </location>
</feature>
<feature type="topological domain" description="Cytoplasmic" evidence="2">
    <location>
        <begin position="95"/>
        <end position="117"/>
    </location>
</feature>
<feature type="transmembrane region" description="Helical" evidence="3">
    <location>
        <begin position="118"/>
        <end position="137"/>
    </location>
</feature>
<feature type="topological domain" description="Periplasmic" evidence="2">
    <location>
        <begin position="138"/>
        <end position="167"/>
    </location>
</feature>
<feature type="transmembrane region" description="Helical" evidence="3">
    <location>
        <begin position="168"/>
        <end position="187"/>
    </location>
</feature>
<feature type="topological domain" description="Cytoplasmic" evidence="2">
    <location>
        <begin position="188"/>
        <end position="232"/>
    </location>
</feature>
<feature type="transmembrane region" description="Helical" evidence="3">
    <location>
        <begin position="233"/>
        <end position="252"/>
    </location>
</feature>
<feature type="topological domain" description="Periplasmic" evidence="2">
    <location>
        <begin position="253"/>
        <end position="283"/>
    </location>
</feature>
<feature type="transmembrane region" description="Helical" evidence="3">
    <location>
        <begin position="284"/>
        <end position="303"/>
    </location>
</feature>
<feature type="topological domain" description="Cytoplasmic" evidence="2">
    <location>
        <begin position="304"/>
        <end position="319"/>
    </location>
</feature>
<feature type="domain" description="ABC transmembrane type-1" evidence="3">
    <location>
        <begin position="75"/>
        <end position="305"/>
    </location>
</feature>
<gene>
    <name type="primary">pstC</name>
    <name type="ordered locus">Z5218</name>
    <name type="ordered locus">ECs4663</name>
</gene>
<name>PSTC_ECO57</name>
<evidence type="ECO:0000250" key="1"/>
<evidence type="ECO:0000255" key="2"/>
<evidence type="ECO:0000255" key="3">
    <source>
        <dbReference type="PROSITE-ProRule" id="PRU00441"/>
    </source>
</evidence>
<evidence type="ECO:0000305" key="4"/>
<keyword id="KW-0997">Cell inner membrane</keyword>
<keyword id="KW-1003">Cell membrane</keyword>
<keyword id="KW-0472">Membrane</keyword>
<keyword id="KW-0592">Phosphate transport</keyword>
<keyword id="KW-1185">Reference proteome</keyword>
<keyword id="KW-0812">Transmembrane</keyword>
<keyword id="KW-1133">Transmembrane helix</keyword>
<keyword id="KW-0813">Transport</keyword>